<keyword id="KW-0238">DNA-binding</keyword>
<keyword id="KW-0479">Metal-binding</keyword>
<keyword id="KW-0539">Nucleus</keyword>
<keyword id="KW-1185">Reference proteome</keyword>
<keyword id="KW-0804">Transcription</keyword>
<keyword id="KW-0805">Transcription regulation</keyword>
<keyword id="KW-0862">Zinc</keyword>
<evidence type="ECO:0000255" key="1">
    <source>
        <dbReference type="PROSITE-ProRule" id="PRU00227"/>
    </source>
</evidence>
<evidence type="ECO:0000269" key="2">
    <source>
    </source>
</evidence>
<evidence type="ECO:0000303" key="3">
    <source>
    </source>
</evidence>
<evidence type="ECO:0000305" key="4">
    <source>
    </source>
</evidence>
<evidence type="ECO:0000305" key="5">
    <source>
    </source>
</evidence>
<gene>
    <name evidence="3" type="primary">fsr6</name>
    <name type="ORF">FFUJ_03989</name>
</gene>
<accession>S0DW94</accession>
<accession>G8C424</accession>
<protein>
    <recommendedName>
        <fullName evidence="3">Fusarubin cluster-specific transcription factor fsr6</fullName>
    </recommendedName>
    <alternativeName>
        <fullName evidence="3">Fusarubin biosynthesis cluster protein 6</fullName>
    </alternativeName>
</protein>
<organism>
    <name type="scientific">Gibberella fujikuroi (strain CBS 195.34 / IMI 58289 / NRRL A-6831)</name>
    <name type="common">Bakanae and foot rot disease fungus</name>
    <name type="synonym">Fusarium fujikuroi</name>
    <dbReference type="NCBI Taxonomy" id="1279085"/>
    <lineage>
        <taxon>Eukaryota</taxon>
        <taxon>Fungi</taxon>
        <taxon>Dikarya</taxon>
        <taxon>Ascomycota</taxon>
        <taxon>Pezizomycotina</taxon>
        <taxon>Sordariomycetes</taxon>
        <taxon>Hypocreomycetidae</taxon>
        <taxon>Hypocreales</taxon>
        <taxon>Nectriaceae</taxon>
        <taxon>Fusarium</taxon>
        <taxon>Fusarium fujikuroi species complex</taxon>
    </lineage>
</organism>
<name>FSR6_GIBF5</name>
<comment type="function">
    <text evidence="4 5">Transcription factor that regulates the expression of the gene cluster that mediates the biosynthesis of fusarubins, highly pigmented naphthoquinones responsible for the coloration of the fruiting bodies (PubMed:22492438, PubMed:23825955).</text>
</comment>
<comment type="subcellular location">
    <subcellularLocation>
        <location evidence="1">Nucleus</location>
    </subcellularLocation>
</comment>
<comment type="induction">
    <text evidence="2">Expression is induced in presence of sodium nitrate, and repressed by glutamine (PubMed:22492438).</text>
</comment>
<comment type="disruption phenotype">
    <text evidence="2">Impairs the red pigmentation due to the production of fusarubin (PubMed:22492438). Results in complete down-regulation of the other five FSR genes (PubMed:22492438).</text>
</comment>
<dbReference type="EMBL" id="HE613440">
    <property type="protein sequence ID" value="CCE67075.1"/>
    <property type="molecule type" value="Genomic_DNA"/>
</dbReference>
<dbReference type="EMBL" id="HF679024">
    <property type="protein sequence ID" value="CCT64758.1"/>
    <property type="molecule type" value="Genomic_DNA"/>
</dbReference>
<dbReference type="RefSeq" id="XP_023426839.1">
    <property type="nucleotide sequence ID" value="XM_023572778.1"/>
</dbReference>
<dbReference type="STRING" id="1279085.S0DW94"/>
<dbReference type="GeneID" id="35397470"/>
<dbReference type="VEuPathDB" id="FungiDB:FFUJ_03989"/>
<dbReference type="Proteomes" id="UP000016800">
    <property type="component" value="Chromosome 2"/>
</dbReference>
<dbReference type="GO" id="GO:0005634">
    <property type="term" value="C:nucleus"/>
    <property type="evidence" value="ECO:0007669"/>
    <property type="project" value="UniProtKB-SubCell"/>
</dbReference>
<dbReference type="GO" id="GO:0003677">
    <property type="term" value="F:DNA binding"/>
    <property type="evidence" value="ECO:0007669"/>
    <property type="project" value="UniProtKB-KW"/>
</dbReference>
<dbReference type="GO" id="GO:0000981">
    <property type="term" value="F:DNA-binding transcription factor activity, RNA polymerase II-specific"/>
    <property type="evidence" value="ECO:0007669"/>
    <property type="project" value="InterPro"/>
</dbReference>
<dbReference type="GO" id="GO:0008270">
    <property type="term" value="F:zinc ion binding"/>
    <property type="evidence" value="ECO:0007669"/>
    <property type="project" value="InterPro"/>
</dbReference>
<dbReference type="GO" id="GO:0045122">
    <property type="term" value="P:aflatoxin biosynthetic process"/>
    <property type="evidence" value="ECO:0007669"/>
    <property type="project" value="InterPro"/>
</dbReference>
<dbReference type="CDD" id="cd00067">
    <property type="entry name" value="GAL4"/>
    <property type="match status" value="1"/>
</dbReference>
<dbReference type="Gene3D" id="4.10.240.10">
    <property type="entry name" value="Zn(2)-C6 fungal-type DNA-binding domain"/>
    <property type="match status" value="1"/>
</dbReference>
<dbReference type="InterPro" id="IPR013700">
    <property type="entry name" value="AflR"/>
</dbReference>
<dbReference type="InterPro" id="IPR050675">
    <property type="entry name" value="OAF3"/>
</dbReference>
<dbReference type="InterPro" id="IPR036864">
    <property type="entry name" value="Zn2-C6_fun-type_DNA-bd_sf"/>
</dbReference>
<dbReference type="InterPro" id="IPR001138">
    <property type="entry name" value="Zn2Cys6_DnaBD"/>
</dbReference>
<dbReference type="PANTHER" id="PTHR31069:SF31">
    <property type="entry name" value="MONODICTYPHENONE CLUSTER TRANSCRIPTION FACTOR-RELATED"/>
    <property type="match status" value="1"/>
</dbReference>
<dbReference type="PANTHER" id="PTHR31069">
    <property type="entry name" value="OLEATE-ACTIVATED TRANSCRIPTION FACTOR 1-RELATED"/>
    <property type="match status" value="1"/>
</dbReference>
<dbReference type="Pfam" id="PF08493">
    <property type="entry name" value="AflR"/>
    <property type="match status" value="1"/>
</dbReference>
<dbReference type="Pfam" id="PF00172">
    <property type="entry name" value="Zn_clus"/>
    <property type="match status" value="1"/>
</dbReference>
<dbReference type="SMART" id="SM00066">
    <property type="entry name" value="GAL4"/>
    <property type="match status" value="1"/>
</dbReference>
<dbReference type="SUPFAM" id="SSF57701">
    <property type="entry name" value="Zn2/Cys6 DNA-binding domain"/>
    <property type="match status" value="1"/>
</dbReference>
<dbReference type="PROSITE" id="PS00463">
    <property type="entry name" value="ZN2_CY6_FUNGAL_1"/>
    <property type="match status" value="1"/>
</dbReference>
<dbReference type="PROSITE" id="PS50048">
    <property type="entry name" value="ZN2_CY6_FUNGAL_2"/>
    <property type="match status" value="1"/>
</dbReference>
<reference key="1">
    <citation type="journal article" date="2012" name="Appl. Environ. Microbiol.">
        <title>Biosynthesis of fusarubins accounts for pigmentation of Fusarium fujikuroi perithecia.</title>
        <authorList>
            <person name="Studt L."/>
            <person name="Wiemann P."/>
            <person name="Kleigrewe K."/>
            <person name="Humpf H.U."/>
            <person name="Tudzynski B."/>
        </authorList>
    </citation>
    <scope>NUCLEOTIDE SEQUENCE [GENOMIC DNA]</scope>
    <scope>FUNCTION</scope>
    <scope>INDUCTION</scope>
    <scope>DISRUPTION PHENOTYPE</scope>
    <source>
        <strain>CBS 195.34 / IMI 58289 / NRRL A-6831</strain>
    </source>
</reference>
<reference key="2">
    <citation type="journal article" date="2013" name="PLoS Pathog.">
        <title>Deciphering the cryptic genome: genome-wide analyses of the rice pathogen Fusarium fujikuroi reveal complex regulation of secondary metabolism and novel metabolites.</title>
        <authorList>
            <person name="Wiemann P."/>
            <person name="Sieber C.M.K."/>
            <person name="von Bargen K.W."/>
            <person name="Studt L."/>
            <person name="Niehaus E.-M."/>
            <person name="Espino J.J."/>
            <person name="Huss K."/>
            <person name="Michielse C.B."/>
            <person name="Albermann S."/>
            <person name="Wagner D."/>
            <person name="Bergner S.V."/>
            <person name="Connolly L.R."/>
            <person name="Fischer A."/>
            <person name="Reuter G."/>
            <person name="Kleigrewe K."/>
            <person name="Bald T."/>
            <person name="Wingfield B.D."/>
            <person name="Ophir R."/>
            <person name="Freeman S."/>
            <person name="Hippler M."/>
            <person name="Smith K.M."/>
            <person name="Brown D.W."/>
            <person name="Proctor R.H."/>
            <person name="Muensterkoetter M."/>
            <person name="Freitag M."/>
            <person name="Humpf H.-U."/>
            <person name="Gueldener U."/>
            <person name="Tudzynski B."/>
        </authorList>
    </citation>
    <scope>NUCLEOTIDE SEQUENCE [LARGE SCALE GENOMIC DNA]</scope>
    <scope>FUNCTION</scope>
    <source>
        <strain>CBS 195.34 / IMI 58289 / NRRL A-6831</strain>
    </source>
</reference>
<proteinExistence type="evidence at transcript level"/>
<feature type="chain" id="PRO_0000442029" description="Fusarubin cluster-specific transcription factor fsr6">
    <location>
        <begin position="1"/>
        <end position="338"/>
    </location>
</feature>
<feature type="DNA-binding region" description="Zn(2)-C6 fungal-type" evidence="1">
    <location>
        <begin position="16"/>
        <end position="44"/>
    </location>
</feature>
<sequence>MSETRSAKPVRLRLACDACTTAKVRCSRTHPCERCEDNGQAKECCYSASRRHGKRARQRQSAQDSSSSSLTTQFTNAWDDYSTYSAGDLEMLDSWASRSVDVTVDFDDGNGISWVDPWKSLGFVSDTTASQSSGMVSPDLSLSTGPILSIKAPEPTAMHSHDCEALALKVLRSLQCNTNTDQSICKSSPIPQKQTFSTPSIDTVLSVNKAALTNLIPLLKCHCARNPHIAMLHSAILSKVIFWYRVAVTARYHADGVELRPMKIQLGMLDLDDEDQATLQRTVVLRELRKAEKVMETFDSFAGGDDGGLNWHVVAVRNMREELQGIIQKIKKCQGELM</sequence>